<keyword id="KW-0129">CBS domain</keyword>
<keyword id="KW-0170">Cobalt</keyword>
<keyword id="KW-0460">Magnesium</keyword>
<keyword id="KW-1185">Reference proteome</keyword>
<keyword id="KW-0677">Repeat</keyword>
<keyword id="KW-0813">Transport</keyword>
<sequence>MSDDNSHSSDTISNKKGFFSLLLSQLFHGEPKNRDELLALIRDSGQNDLIDEDTRDMLEGVMDIADQRVRDIMIPRSQMITLKRNQTLDECLDVIIESAHSRFPVISEDKDHIEGILMAKDLLPFMRSDAEAFSMDKVLRQAVVVPESKRVDRMLKEFRSQRYHMAIVIDEFGGVSGLVTIEDILELIVGEIEDEYDEEDDIDFRQLSRHTWTVRALASIEDFNEAFGTHFSDEEVDTIGGLVMQAFGHLPARGETIDIDGYQFKVAMADSRRIIQVHVKIPDDSPQPKLDE</sequence>
<organism>
    <name type="scientific">Escherichia coli O157:H7</name>
    <dbReference type="NCBI Taxonomy" id="83334"/>
    <lineage>
        <taxon>Bacteria</taxon>
        <taxon>Pseudomonadati</taxon>
        <taxon>Pseudomonadota</taxon>
        <taxon>Gammaproteobacteria</taxon>
        <taxon>Enterobacterales</taxon>
        <taxon>Enterobacteriaceae</taxon>
        <taxon>Escherichia</taxon>
    </lineage>
</organism>
<reference key="1">
    <citation type="journal article" date="2001" name="Nature">
        <title>Genome sequence of enterohaemorrhagic Escherichia coli O157:H7.</title>
        <authorList>
            <person name="Perna N.T."/>
            <person name="Plunkett G. III"/>
            <person name="Burland V."/>
            <person name="Mau B."/>
            <person name="Glasner J.D."/>
            <person name="Rose D.J."/>
            <person name="Mayhew G.F."/>
            <person name="Evans P.S."/>
            <person name="Gregor J."/>
            <person name="Kirkpatrick H.A."/>
            <person name="Posfai G."/>
            <person name="Hackett J."/>
            <person name="Klink S."/>
            <person name="Boutin A."/>
            <person name="Shao Y."/>
            <person name="Miller L."/>
            <person name="Grotbeck E.J."/>
            <person name="Davis N.W."/>
            <person name="Lim A."/>
            <person name="Dimalanta E.T."/>
            <person name="Potamousis K."/>
            <person name="Apodaca J."/>
            <person name="Anantharaman T.S."/>
            <person name="Lin J."/>
            <person name="Yen G."/>
            <person name="Schwartz D.C."/>
            <person name="Welch R.A."/>
            <person name="Blattner F.R."/>
        </authorList>
    </citation>
    <scope>NUCLEOTIDE SEQUENCE [LARGE SCALE GENOMIC DNA]</scope>
    <source>
        <strain>O157:H7 / EDL933 / ATCC 700927 / EHEC</strain>
    </source>
</reference>
<reference key="2">
    <citation type="journal article" date="2001" name="DNA Res.">
        <title>Complete genome sequence of enterohemorrhagic Escherichia coli O157:H7 and genomic comparison with a laboratory strain K-12.</title>
        <authorList>
            <person name="Hayashi T."/>
            <person name="Makino K."/>
            <person name="Ohnishi M."/>
            <person name="Kurokawa K."/>
            <person name="Ishii K."/>
            <person name="Yokoyama K."/>
            <person name="Han C.-G."/>
            <person name="Ohtsubo E."/>
            <person name="Nakayama K."/>
            <person name="Murata T."/>
            <person name="Tanaka M."/>
            <person name="Tobe T."/>
            <person name="Iida T."/>
            <person name="Takami H."/>
            <person name="Honda T."/>
            <person name="Sasakawa C."/>
            <person name="Ogasawara N."/>
            <person name="Yasunaga T."/>
            <person name="Kuhara S."/>
            <person name="Shiba T."/>
            <person name="Hattori M."/>
            <person name="Shinagawa H."/>
        </authorList>
    </citation>
    <scope>NUCLEOTIDE SEQUENCE [LARGE SCALE GENOMIC DNA]</scope>
    <source>
        <strain>O157:H7 / Sakai / RIMD 0509952 / EHEC</strain>
    </source>
</reference>
<dbReference type="EMBL" id="AE005174">
    <property type="protein sequence ID" value="AAG54991.1"/>
    <property type="molecule type" value="Genomic_DNA"/>
</dbReference>
<dbReference type="EMBL" id="BA000007">
    <property type="protein sequence ID" value="BAB34119.1"/>
    <property type="molecule type" value="Genomic_DNA"/>
</dbReference>
<dbReference type="PIR" id="C85566">
    <property type="entry name" value="C85566"/>
</dbReference>
<dbReference type="PIR" id="H90715">
    <property type="entry name" value="H90715"/>
</dbReference>
<dbReference type="RefSeq" id="WP_001278605.1">
    <property type="nucleotide sequence ID" value="NZ_VOAI01000012.1"/>
</dbReference>
<dbReference type="SMR" id="P0AE80"/>
<dbReference type="STRING" id="155864.Z0807"/>
<dbReference type="DNASU" id="957717"/>
<dbReference type="GeneID" id="93776824"/>
<dbReference type="KEGG" id="ece:Z0807"/>
<dbReference type="KEGG" id="ecs:ECs_0696"/>
<dbReference type="PATRIC" id="fig|386585.9.peg.810"/>
<dbReference type="eggNOG" id="COG4535">
    <property type="taxonomic scope" value="Bacteria"/>
</dbReference>
<dbReference type="HOGENOM" id="CLU_015237_3_0_6"/>
<dbReference type="OMA" id="QMISIKA"/>
<dbReference type="Proteomes" id="UP000000558">
    <property type="component" value="Chromosome"/>
</dbReference>
<dbReference type="Proteomes" id="UP000002519">
    <property type="component" value="Chromosome"/>
</dbReference>
<dbReference type="GO" id="GO:0005886">
    <property type="term" value="C:plasma membrane"/>
    <property type="evidence" value="ECO:0007669"/>
    <property type="project" value="TreeGrafter"/>
</dbReference>
<dbReference type="GO" id="GO:0050660">
    <property type="term" value="F:flavin adenine dinucleotide binding"/>
    <property type="evidence" value="ECO:0007669"/>
    <property type="project" value="InterPro"/>
</dbReference>
<dbReference type="CDD" id="cd04590">
    <property type="entry name" value="CBS_pair_CorC_HlyC_assoc"/>
    <property type="match status" value="1"/>
</dbReference>
<dbReference type="FunFam" id="3.30.465.10:FF:000003">
    <property type="entry name" value="Magnesium and cobalt efflux protein corC"/>
    <property type="match status" value="1"/>
</dbReference>
<dbReference type="FunFam" id="3.10.580.10:FF:000002">
    <property type="entry name" value="Magnesium/cobalt efflux protein CorC"/>
    <property type="match status" value="1"/>
</dbReference>
<dbReference type="Gene3D" id="3.30.465.10">
    <property type="match status" value="1"/>
</dbReference>
<dbReference type="Gene3D" id="3.10.580.10">
    <property type="entry name" value="CBS-domain"/>
    <property type="match status" value="1"/>
</dbReference>
<dbReference type="InterPro" id="IPR000644">
    <property type="entry name" value="CBS_dom"/>
</dbReference>
<dbReference type="InterPro" id="IPR046342">
    <property type="entry name" value="CBS_dom_sf"/>
</dbReference>
<dbReference type="InterPro" id="IPR054115">
    <property type="entry name" value="CorC_N"/>
</dbReference>
<dbReference type="InterPro" id="IPR036318">
    <property type="entry name" value="FAD-bd_PCMH-like_sf"/>
</dbReference>
<dbReference type="InterPro" id="IPR016169">
    <property type="entry name" value="FAD-bd_PCMH_sub2"/>
</dbReference>
<dbReference type="InterPro" id="IPR044751">
    <property type="entry name" value="Ion_transp-like_CBS"/>
</dbReference>
<dbReference type="InterPro" id="IPR005170">
    <property type="entry name" value="Transptr-assoc_dom"/>
</dbReference>
<dbReference type="NCBIfam" id="NF011675">
    <property type="entry name" value="PRK15094.1"/>
    <property type="match status" value="1"/>
</dbReference>
<dbReference type="PANTHER" id="PTHR22777">
    <property type="entry name" value="HEMOLYSIN-RELATED"/>
    <property type="match status" value="1"/>
</dbReference>
<dbReference type="PANTHER" id="PTHR22777:SF27">
    <property type="entry name" value="MAGNESIUM AND COBALT EFFLUX PROTEIN CORC"/>
    <property type="match status" value="1"/>
</dbReference>
<dbReference type="Pfam" id="PF00571">
    <property type="entry name" value="CBS"/>
    <property type="match status" value="2"/>
</dbReference>
<dbReference type="Pfam" id="PF03471">
    <property type="entry name" value="CorC_HlyC"/>
    <property type="match status" value="1"/>
</dbReference>
<dbReference type="Pfam" id="PF21917">
    <property type="entry name" value="NMB0537_N"/>
    <property type="match status" value="1"/>
</dbReference>
<dbReference type="SMART" id="SM00116">
    <property type="entry name" value="CBS"/>
    <property type="match status" value="2"/>
</dbReference>
<dbReference type="SMART" id="SM01091">
    <property type="entry name" value="CorC_HlyC"/>
    <property type="match status" value="1"/>
</dbReference>
<dbReference type="SUPFAM" id="SSF54631">
    <property type="entry name" value="CBS-domain pair"/>
    <property type="match status" value="1"/>
</dbReference>
<dbReference type="SUPFAM" id="SSF56176">
    <property type="entry name" value="FAD-binding/transporter-associated domain-like"/>
    <property type="match status" value="1"/>
</dbReference>
<dbReference type="PROSITE" id="PS51371">
    <property type="entry name" value="CBS"/>
    <property type="match status" value="2"/>
</dbReference>
<feature type="chain" id="PRO_0000088346" description="Magnesium and cobalt efflux protein CorC">
    <location>
        <begin position="1"/>
        <end position="292"/>
    </location>
</feature>
<feature type="domain" description="CBS 1" evidence="2">
    <location>
        <begin position="73"/>
        <end position="133"/>
    </location>
</feature>
<feature type="domain" description="CBS 2" evidence="2">
    <location>
        <begin position="135"/>
        <end position="195"/>
    </location>
</feature>
<accession>P0AE80</accession>
<accession>P77392</accession>
<gene>
    <name type="primary">corC</name>
    <name type="ordered locus">Z0807</name>
    <name type="ordered locus">ECs0696</name>
</gene>
<evidence type="ECO:0000250" key="1"/>
<evidence type="ECO:0000255" key="2">
    <source>
        <dbReference type="PROSITE-ProRule" id="PRU00703"/>
    </source>
</evidence>
<evidence type="ECO:0000305" key="3"/>
<protein>
    <recommendedName>
        <fullName>Magnesium and cobalt efflux protein CorC</fullName>
    </recommendedName>
</protein>
<proteinExistence type="inferred from homology"/>
<name>CORC_ECO57</name>
<comment type="function">
    <text evidence="1">Plays a role in the transport of magnesium and cobalt ions.</text>
</comment>
<comment type="similarity">
    <text evidence="3">Belongs to the UPF0053 family.</text>
</comment>